<name>UPPP_SORC5</name>
<evidence type="ECO:0000255" key="1">
    <source>
        <dbReference type="HAMAP-Rule" id="MF_01006"/>
    </source>
</evidence>
<organism>
    <name type="scientific">Sorangium cellulosum (strain So ce56)</name>
    <name type="common">Polyangium cellulosum (strain So ce56)</name>
    <dbReference type="NCBI Taxonomy" id="448385"/>
    <lineage>
        <taxon>Bacteria</taxon>
        <taxon>Pseudomonadati</taxon>
        <taxon>Myxococcota</taxon>
        <taxon>Polyangia</taxon>
        <taxon>Polyangiales</taxon>
        <taxon>Polyangiaceae</taxon>
        <taxon>Sorangium</taxon>
    </lineage>
</organism>
<protein>
    <recommendedName>
        <fullName evidence="1">Undecaprenyl-diphosphatase</fullName>
        <ecNumber evidence="1">3.6.1.27</ecNumber>
    </recommendedName>
    <alternativeName>
        <fullName evidence="1">Bacitracin resistance protein</fullName>
    </alternativeName>
    <alternativeName>
        <fullName evidence="1">Undecaprenyl pyrophosphate phosphatase</fullName>
    </alternativeName>
</protein>
<accession>A9GC83</accession>
<reference key="1">
    <citation type="journal article" date="2007" name="Nat. Biotechnol.">
        <title>Complete genome sequence of the myxobacterium Sorangium cellulosum.</title>
        <authorList>
            <person name="Schneiker S."/>
            <person name="Perlova O."/>
            <person name="Kaiser O."/>
            <person name="Gerth K."/>
            <person name="Alici A."/>
            <person name="Altmeyer M.O."/>
            <person name="Bartels D."/>
            <person name="Bekel T."/>
            <person name="Beyer S."/>
            <person name="Bode E."/>
            <person name="Bode H.B."/>
            <person name="Bolten C.J."/>
            <person name="Choudhuri J.V."/>
            <person name="Doss S."/>
            <person name="Elnakady Y.A."/>
            <person name="Frank B."/>
            <person name="Gaigalat L."/>
            <person name="Goesmann A."/>
            <person name="Groeger C."/>
            <person name="Gross F."/>
            <person name="Jelsbak L."/>
            <person name="Jelsbak L."/>
            <person name="Kalinowski J."/>
            <person name="Kegler C."/>
            <person name="Knauber T."/>
            <person name="Konietzny S."/>
            <person name="Kopp M."/>
            <person name="Krause L."/>
            <person name="Krug D."/>
            <person name="Linke B."/>
            <person name="Mahmud T."/>
            <person name="Martinez-Arias R."/>
            <person name="McHardy A.C."/>
            <person name="Merai M."/>
            <person name="Meyer F."/>
            <person name="Mormann S."/>
            <person name="Munoz-Dorado J."/>
            <person name="Perez J."/>
            <person name="Pradella S."/>
            <person name="Rachid S."/>
            <person name="Raddatz G."/>
            <person name="Rosenau F."/>
            <person name="Rueckert C."/>
            <person name="Sasse F."/>
            <person name="Scharfe M."/>
            <person name="Schuster S.C."/>
            <person name="Suen G."/>
            <person name="Treuner-Lange A."/>
            <person name="Velicer G.J."/>
            <person name="Vorholter F.-J."/>
            <person name="Weissman K.J."/>
            <person name="Welch R.D."/>
            <person name="Wenzel S.C."/>
            <person name="Whitworth D.E."/>
            <person name="Wilhelm S."/>
            <person name="Wittmann C."/>
            <person name="Bloecker H."/>
            <person name="Puehler A."/>
            <person name="Mueller R."/>
        </authorList>
    </citation>
    <scope>NUCLEOTIDE SEQUENCE [LARGE SCALE GENOMIC DNA]</scope>
    <source>
        <strain>So ce56</strain>
    </source>
</reference>
<comment type="function">
    <text evidence="1">Catalyzes the dephosphorylation of undecaprenyl diphosphate (UPP). Confers resistance to bacitracin.</text>
</comment>
<comment type="catalytic activity">
    <reaction evidence="1">
        <text>di-trans,octa-cis-undecaprenyl diphosphate + H2O = di-trans,octa-cis-undecaprenyl phosphate + phosphate + H(+)</text>
        <dbReference type="Rhea" id="RHEA:28094"/>
        <dbReference type="ChEBI" id="CHEBI:15377"/>
        <dbReference type="ChEBI" id="CHEBI:15378"/>
        <dbReference type="ChEBI" id="CHEBI:43474"/>
        <dbReference type="ChEBI" id="CHEBI:58405"/>
        <dbReference type="ChEBI" id="CHEBI:60392"/>
        <dbReference type="EC" id="3.6.1.27"/>
    </reaction>
</comment>
<comment type="subcellular location">
    <subcellularLocation>
        <location evidence="1">Cell inner membrane</location>
        <topology evidence="1">Multi-pass membrane protein</topology>
    </subcellularLocation>
</comment>
<comment type="miscellaneous">
    <text>Bacitracin is thought to be involved in the inhibition of peptidoglycan synthesis by sequestering undecaprenyl diphosphate, thereby reducing the pool of lipid carrier available.</text>
</comment>
<comment type="similarity">
    <text evidence="1">Belongs to the UppP family.</text>
</comment>
<proteinExistence type="inferred from homology"/>
<keyword id="KW-0046">Antibiotic resistance</keyword>
<keyword id="KW-0997">Cell inner membrane</keyword>
<keyword id="KW-1003">Cell membrane</keyword>
<keyword id="KW-0133">Cell shape</keyword>
<keyword id="KW-0961">Cell wall biogenesis/degradation</keyword>
<keyword id="KW-0378">Hydrolase</keyword>
<keyword id="KW-0472">Membrane</keyword>
<keyword id="KW-0573">Peptidoglycan synthesis</keyword>
<keyword id="KW-1185">Reference proteome</keyword>
<keyword id="KW-0812">Transmembrane</keyword>
<keyword id="KW-1133">Transmembrane helix</keyword>
<sequence>MFWFDAVLLGVLEGLTEFLPVSSTGHLILLGAWLGHQSEAAKTLDIVIQLGAVLAVVVYFRERLSTTVRGMVRRDPDSLRLALALAFAFLPAAVVGLLFHKAIKAHLFGPGPVAAALIVGGFLMIGVESLRRRRPDQGAPRVEDVTFQRALAIGFAQCFSLWPGASRSMTTIVGGQLSGLSTAAAAEFSFLLAIPTLGAATVFDLVKNGRALLDAPGGIVALVVGLAVSFAVALLVIAVFLRYLKRYGLAPFGWYRIALGALVLWLWIASRSAPAEAGAASASPAPRGDVAAAVDGLARTGDHPSRP</sequence>
<gene>
    <name evidence="1" type="primary">uppP</name>
    <name type="ordered locus">sce5989</name>
</gene>
<dbReference type="EC" id="3.6.1.27" evidence="1"/>
<dbReference type="EMBL" id="AM746676">
    <property type="protein sequence ID" value="CAN96153.1"/>
    <property type="molecule type" value="Genomic_DNA"/>
</dbReference>
<dbReference type="RefSeq" id="WP_012238618.1">
    <property type="nucleotide sequence ID" value="NC_010162.1"/>
</dbReference>
<dbReference type="SMR" id="A9GC83"/>
<dbReference type="STRING" id="448385.sce5989"/>
<dbReference type="KEGG" id="scl:sce5989"/>
<dbReference type="eggNOG" id="COG1968">
    <property type="taxonomic scope" value="Bacteria"/>
</dbReference>
<dbReference type="HOGENOM" id="CLU_060296_2_0_7"/>
<dbReference type="OrthoDB" id="9808289at2"/>
<dbReference type="BioCyc" id="SCEL448385:SCE_RS30770-MONOMER"/>
<dbReference type="Proteomes" id="UP000002139">
    <property type="component" value="Chromosome"/>
</dbReference>
<dbReference type="GO" id="GO:0005886">
    <property type="term" value="C:plasma membrane"/>
    <property type="evidence" value="ECO:0007669"/>
    <property type="project" value="UniProtKB-SubCell"/>
</dbReference>
<dbReference type="GO" id="GO:0050380">
    <property type="term" value="F:undecaprenyl-diphosphatase activity"/>
    <property type="evidence" value="ECO:0007669"/>
    <property type="project" value="UniProtKB-UniRule"/>
</dbReference>
<dbReference type="GO" id="GO:0071555">
    <property type="term" value="P:cell wall organization"/>
    <property type="evidence" value="ECO:0007669"/>
    <property type="project" value="UniProtKB-KW"/>
</dbReference>
<dbReference type="GO" id="GO:0009252">
    <property type="term" value="P:peptidoglycan biosynthetic process"/>
    <property type="evidence" value="ECO:0007669"/>
    <property type="project" value="UniProtKB-KW"/>
</dbReference>
<dbReference type="GO" id="GO:0008360">
    <property type="term" value="P:regulation of cell shape"/>
    <property type="evidence" value="ECO:0007669"/>
    <property type="project" value="UniProtKB-KW"/>
</dbReference>
<dbReference type="GO" id="GO:0046677">
    <property type="term" value="P:response to antibiotic"/>
    <property type="evidence" value="ECO:0007669"/>
    <property type="project" value="UniProtKB-UniRule"/>
</dbReference>
<dbReference type="HAMAP" id="MF_01006">
    <property type="entry name" value="Undec_diphosphatase"/>
    <property type="match status" value="1"/>
</dbReference>
<dbReference type="InterPro" id="IPR003824">
    <property type="entry name" value="UppP"/>
</dbReference>
<dbReference type="NCBIfam" id="NF001389">
    <property type="entry name" value="PRK00281.1-2"/>
    <property type="match status" value="1"/>
</dbReference>
<dbReference type="NCBIfam" id="NF001390">
    <property type="entry name" value="PRK00281.1-4"/>
    <property type="match status" value="1"/>
</dbReference>
<dbReference type="NCBIfam" id="TIGR00753">
    <property type="entry name" value="undec_PP_bacA"/>
    <property type="match status" value="1"/>
</dbReference>
<dbReference type="PANTHER" id="PTHR30622">
    <property type="entry name" value="UNDECAPRENYL-DIPHOSPHATASE"/>
    <property type="match status" value="1"/>
</dbReference>
<dbReference type="PANTHER" id="PTHR30622:SF3">
    <property type="entry name" value="UNDECAPRENYL-DIPHOSPHATASE"/>
    <property type="match status" value="1"/>
</dbReference>
<dbReference type="Pfam" id="PF02673">
    <property type="entry name" value="BacA"/>
    <property type="match status" value="1"/>
</dbReference>
<feature type="chain" id="PRO_1000083991" description="Undecaprenyl-diphosphatase">
    <location>
        <begin position="1"/>
        <end position="307"/>
    </location>
</feature>
<feature type="transmembrane region" description="Helical" evidence="1">
    <location>
        <begin position="40"/>
        <end position="60"/>
    </location>
</feature>
<feature type="transmembrane region" description="Helical" evidence="1">
    <location>
        <begin position="79"/>
        <end position="99"/>
    </location>
</feature>
<feature type="transmembrane region" description="Helical" evidence="1">
    <location>
        <begin position="107"/>
        <end position="127"/>
    </location>
</feature>
<feature type="transmembrane region" description="Helical" evidence="1">
    <location>
        <begin position="183"/>
        <end position="203"/>
    </location>
</feature>
<feature type="transmembrane region" description="Helical" evidence="1">
    <location>
        <begin position="219"/>
        <end position="239"/>
    </location>
</feature>
<feature type="transmembrane region" description="Helical" evidence="1">
    <location>
        <begin position="249"/>
        <end position="269"/>
    </location>
</feature>